<evidence type="ECO:0000250" key="1"/>
<evidence type="ECO:0000255" key="2"/>
<evidence type="ECO:0000255" key="3">
    <source>
        <dbReference type="PROSITE-ProRule" id="PRU00320"/>
    </source>
</evidence>
<evidence type="ECO:0000255" key="4">
    <source>
        <dbReference type="PROSITE-ProRule" id="PRU00583"/>
    </source>
</evidence>
<evidence type="ECO:0000256" key="5">
    <source>
        <dbReference type="SAM" id="MobiDB-lite"/>
    </source>
</evidence>
<evidence type="ECO:0000305" key="6"/>
<name>TIGD1_HUMAN</name>
<protein>
    <recommendedName>
        <fullName>Tigger transposable element-derived protein 1</fullName>
    </recommendedName>
</protein>
<keyword id="KW-0238">DNA-binding</keyword>
<keyword id="KW-0539">Nucleus</keyword>
<keyword id="KW-1267">Proteomics identification</keyword>
<keyword id="KW-1185">Reference proteome</keyword>
<reference key="1">
    <citation type="journal article" date="2004" name="Nat. Genet.">
        <title>Complete sequencing and characterization of 21,243 full-length human cDNAs.</title>
        <authorList>
            <person name="Ota T."/>
            <person name="Suzuki Y."/>
            <person name="Nishikawa T."/>
            <person name="Otsuki T."/>
            <person name="Sugiyama T."/>
            <person name="Irie R."/>
            <person name="Wakamatsu A."/>
            <person name="Hayashi K."/>
            <person name="Sato H."/>
            <person name="Nagai K."/>
            <person name="Kimura K."/>
            <person name="Makita H."/>
            <person name="Sekine M."/>
            <person name="Obayashi M."/>
            <person name="Nishi T."/>
            <person name="Shibahara T."/>
            <person name="Tanaka T."/>
            <person name="Ishii S."/>
            <person name="Yamamoto J."/>
            <person name="Saito K."/>
            <person name="Kawai Y."/>
            <person name="Isono Y."/>
            <person name="Nakamura Y."/>
            <person name="Nagahari K."/>
            <person name="Murakami K."/>
            <person name="Yasuda T."/>
            <person name="Iwayanagi T."/>
            <person name="Wagatsuma M."/>
            <person name="Shiratori A."/>
            <person name="Sudo H."/>
            <person name="Hosoiri T."/>
            <person name="Kaku Y."/>
            <person name="Kodaira H."/>
            <person name="Kondo H."/>
            <person name="Sugawara M."/>
            <person name="Takahashi M."/>
            <person name="Kanda K."/>
            <person name="Yokoi T."/>
            <person name="Furuya T."/>
            <person name="Kikkawa E."/>
            <person name="Omura Y."/>
            <person name="Abe K."/>
            <person name="Kamihara K."/>
            <person name="Katsuta N."/>
            <person name="Sato K."/>
            <person name="Tanikawa M."/>
            <person name="Yamazaki M."/>
            <person name="Ninomiya K."/>
            <person name="Ishibashi T."/>
            <person name="Yamashita H."/>
            <person name="Murakawa K."/>
            <person name="Fujimori K."/>
            <person name="Tanai H."/>
            <person name="Kimata M."/>
            <person name="Watanabe M."/>
            <person name="Hiraoka S."/>
            <person name="Chiba Y."/>
            <person name="Ishida S."/>
            <person name="Ono Y."/>
            <person name="Takiguchi S."/>
            <person name="Watanabe S."/>
            <person name="Yosida M."/>
            <person name="Hotuta T."/>
            <person name="Kusano J."/>
            <person name="Kanehori K."/>
            <person name="Takahashi-Fujii A."/>
            <person name="Hara H."/>
            <person name="Tanase T.-O."/>
            <person name="Nomura Y."/>
            <person name="Togiya S."/>
            <person name="Komai F."/>
            <person name="Hara R."/>
            <person name="Takeuchi K."/>
            <person name="Arita M."/>
            <person name="Imose N."/>
            <person name="Musashino K."/>
            <person name="Yuuki H."/>
            <person name="Oshima A."/>
            <person name="Sasaki N."/>
            <person name="Aotsuka S."/>
            <person name="Yoshikawa Y."/>
            <person name="Matsunawa H."/>
            <person name="Ichihara T."/>
            <person name="Shiohata N."/>
            <person name="Sano S."/>
            <person name="Moriya S."/>
            <person name="Momiyama H."/>
            <person name="Satoh N."/>
            <person name="Takami S."/>
            <person name="Terashima Y."/>
            <person name="Suzuki O."/>
            <person name="Nakagawa S."/>
            <person name="Senoh A."/>
            <person name="Mizoguchi H."/>
            <person name="Goto Y."/>
            <person name="Shimizu F."/>
            <person name="Wakebe H."/>
            <person name="Hishigaki H."/>
            <person name="Watanabe T."/>
            <person name="Sugiyama A."/>
            <person name="Takemoto M."/>
            <person name="Kawakami B."/>
            <person name="Yamazaki M."/>
            <person name="Watanabe K."/>
            <person name="Kumagai A."/>
            <person name="Itakura S."/>
            <person name="Fukuzumi Y."/>
            <person name="Fujimori Y."/>
            <person name="Komiyama M."/>
            <person name="Tashiro H."/>
            <person name="Tanigami A."/>
            <person name="Fujiwara T."/>
            <person name="Ono T."/>
            <person name="Yamada K."/>
            <person name="Fujii Y."/>
            <person name="Ozaki K."/>
            <person name="Hirao M."/>
            <person name="Ohmori Y."/>
            <person name="Kawabata A."/>
            <person name="Hikiji T."/>
            <person name="Kobatake N."/>
            <person name="Inagaki H."/>
            <person name="Ikema Y."/>
            <person name="Okamoto S."/>
            <person name="Okitani R."/>
            <person name="Kawakami T."/>
            <person name="Noguchi S."/>
            <person name="Itoh T."/>
            <person name="Shigeta K."/>
            <person name="Senba T."/>
            <person name="Matsumura K."/>
            <person name="Nakajima Y."/>
            <person name="Mizuno T."/>
            <person name="Morinaga M."/>
            <person name="Sasaki M."/>
            <person name="Togashi T."/>
            <person name="Oyama M."/>
            <person name="Hata H."/>
            <person name="Watanabe M."/>
            <person name="Komatsu T."/>
            <person name="Mizushima-Sugano J."/>
            <person name="Satoh T."/>
            <person name="Shirai Y."/>
            <person name="Takahashi Y."/>
            <person name="Nakagawa K."/>
            <person name="Okumura K."/>
            <person name="Nagase T."/>
            <person name="Nomura N."/>
            <person name="Kikuchi H."/>
            <person name="Masuho Y."/>
            <person name="Yamashita R."/>
            <person name="Nakai K."/>
            <person name="Yada T."/>
            <person name="Nakamura Y."/>
            <person name="Ohara O."/>
            <person name="Isogai T."/>
            <person name="Sugano S."/>
        </authorList>
    </citation>
    <scope>NUCLEOTIDE SEQUENCE [LARGE SCALE MRNA]</scope>
    <source>
        <tissue>Teratocarcinoma</tissue>
    </source>
</reference>
<reference key="2">
    <citation type="journal article" date="2005" name="Nature">
        <title>Generation and annotation of the DNA sequences of human chromosomes 2 and 4.</title>
        <authorList>
            <person name="Hillier L.W."/>
            <person name="Graves T.A."/>
            <person name="Fulton R.S."/>
            <person name="Fulton L.A."/>
            <person name="Pepin K.H."/>
            <person name="Minx P."/>
            <person name="Wagner-McPherson C."/>
            <person name="Layman D."/>
            <person name="Wylie K."/>
            <person name="Sekhon M."/>
            <person name="Becker M.C."/>
            <person name="Fewell G.A."/>
            <person name="Delehaunty K.D."/>
            <person name="Miner T.L."/>
            <person name="Nash W.E."/>
            <person name="Kremitzki C."/>
            <person name="Oddy L."/>
            <person name="Du H."/>
            <person name="Sun H."/>
            <person name="Bradshaw-Cordum H."/>
            <person name="Ali J."/>
            <person name="Carter J."/>
            <person name="Cordes M."/>
            <person name="Harris A."/>
            <person name="Isak A."/>
            <person name="van Brunt A."/>
            <person name="Nguyen C."/>
            <person name="Du F."/>
            <person name="Courtney L."/>
            <person name="Kalicki J."/>
            <person name="Ozersky P."/>
            <person name="Abbott S."/>
            <person name="Armstrong J."/>
            <person name="Belter E.A."/>
            <person name="Caruso L."/>
            <person name="Cedroni M."/>
            <person name="Cotton M."/>
            <person name="Davidson T."/>
            <person name="Desai A."/>
            <person name="Elliott G."/>
            <person name="Erb T."/>
            <person name="Fronick C."/>
            <person name="Gaige T."/>
            <person name="Haakenson W."/>
            <person name="Haglund K."/>
            <person name="Holmes A."/>
            <person name="Harkins R."/>
            <person name="Kim K."/>
            <person name="Kruchowski S.S."/>
            <person name="Strong C.M."/>
            <person name="Grewal N."/>
            <person name="Goyea E."/>
            <person name="Hou S."/>
            <person name="Levy A."/>
            <person name="Martinka S."/>
            <person name="Mead K."/>
            <person name="McLellan M.D."/>
            <person name="Meyer R."/>
            <person name="Randall-Maher J."/>
            <person name="Tomlinson C."/>
            <person name="Dauphin-Kohlberg S."/>
            <person name="Kozlowicz-Reilly A."/>
            <person name="Shah N."/>
            <person name="Swearengen-Shahid S."/>
            <person name="Snider J."/>
            <person name="Strong J.T."/>
            <person name="Thompson J."/>
            <person name="Yoakum M."/>
            <person name="Leonard S."/>
            <person name="Pearman C."/>
            <person name="Trani L."/>
            <person name="Radionenko M."/>
            <person name="Waligorski J.E."/>
            <person name="Wang C."/>
            <person name="Rock S.M."/>
            <person name="Tin-Wollam A.-M."/>
            <person name="Maupin R."/>
            <person name="Latreille P."/>
            <person name="Wendl M.C."/>
            <person name="Yang S.-P."/>
            <person name="Pohl C."/>
            <person name="Wallis J.W."/>
            <person name="Spieth J."/>
            <person name="Bieri T.A."/>
            <person name="Berkowicz N."/>
            <person name="Nelson J.O."/>
            <person name="Osborne J."/>
            <person name="Ding L."/>
            <person name="Meyer R."/>
            <person name="Sabo A."/>
            <person name="Shotland Y."/>
            <person name="Sinha P."/>
            <person name="Wohldmann P.E."/>
            <person name="Cook L.L."/>
            <person name="Hickenbotham M.T."/>
            <person name="Eldred J."/>
            <person name="Williams D."/>
            <person name="Jones T.A."/>
            <person name="She X."/>
            <person name="Ciccarelli F.D."/>
            <person name="Izaurralde E."/>
            <person name="Taylor J."/>
            <person name="Schmutz J."/>
            <person name="Myers R.M."/>
            <person name="Cox D.R."/>
            <person name="Huang X."/>
            <person name="McPherson J.D."/>
            <person name="Mardis E.R."/>
            <person name="Clifton S.W."/>
            <person name="Warren W.C."/>
            <person name="Chinwalla A.T."/>
            <person name="Eddy S.R."/>
            <person name="Marra M.A."/>
            <person name="Ovcharenko I."/>
            <person name="Furey T.S."/>
            <person name="Miller W."/>
            <person name="Eichler E.E."/>
            <person name="Bork P."/>
            <person name="Suyama M."/>
            <person name="Torrents D."/>
            <person name="Waterston R.H."/>
            <person name="Wilson R.K."/>
        </authorList>
    </citation>
    <scope>NUCLEOTIDE SEQUENCE [LARGE SCALE GENOMIC DNA]</scope>
</reference>
<reference key="3">
    <citation type="journal article" date="2004" name="Genome Res.">
        <title>The status, quality, and expansion of the NIH full-length cDNA project: the Mammalian Gene Collection (MGC).</title>
        <authorList>
            <consortium name="The MGC Project Team"/>
        </authorList>
    </citation>
    <scope>NUCLEOTIDE SEQUENCE [LARGE SCALE MRNA]</scope>
    <source>
        <tissue>Brain</tissue>
    </source>
</reference>
<reference key="4">
    <citation type="journal article" date="2008" name="Proc. Natl. Acad. Sci. U.S.A.">
        <title>A quantitative atlas of mitotic phosphorylation.</title>
        <authorList>
            <person name="Dephoure N."/>
            <person name="Zhou C."/>
            <person name="Villen J."/>
            <person name="Beausoleil S.A."/>
            <person name="Bakalarski C.E."/>
            <person name="Elledge S.J."/>
            <person name="Gygi S.P."/>
        </authorList>
    </citation>
    <scope>IDENTIFICATION BY MASS SPECTROMETRY [LARGE SCALE ANALYSIS]</scope>
    <source>
        <tissue>Cervix carcinoma</tissue>
    </source>
</reference>
<feature type="chain" id="PRO_0000272615" description="Tigger transposable element-derived protein 1">
    <location>
        <begin position="1"/>
        <end position="591"/>
    </location>
</feature>
<feature type="domain" description="HTH psq-type" evidence="3">
    <location>
        <begin position="6"/>
        <end position="57"/>
    </location>
</feature>
<feature type="domain" description="HTH CENPB-type" evidence="4">
    <location>
        <begin position="70"/>
        <end position="149"/>
    </location>
</feature>
<feature type="domain" description="DDE-1" evidence="2">
    <location>
        <begin position="178"/>
        <end position="403"/>
    </location>
</feature>
<feature type="DNA-binding region" description="H-T-H motif" evidence="1">
    <location>
        <begin position="33"/>
        <end position="53"/>
    </location>
</feature>
<feature type="DNA-binding region" description="H-T-H motif" evidence="1">
    <location>
        <begin position="103"/>
        <end position="142"/>
    </location>
</feature>
<feature type="region of interest" description="Disordered" evidence="5">
    <location>
        <begin position="550"/>
        <end position="591"/>
    </location>
</feature>
<feature type="compositionally biased region" description="Polar residues" evidence="5">
    <location>
        <begin position="561"/>
        <end position="576"/>
    </location>
</feature>
<feature type="sequence conflict" description="In Ref. 3; AAH35143." evidence="6" ref="3">
    <original>N</original>
    <variation>S</variation>
    <location>
        <position position="249"/>
    </location>
</feature>
<feature type="sequence conflict" description="In Ref. 3; AAH35143." evidence="6" ref="3">
    <original>D</original>
    <variation>G</variation>
    <location>
        <position position="302"/>
    </location>
</feature>
<organism>
    <name type="scientific">Homo sapiens</name>
    <name type="common">Human</name>
    <dbReference type="NCBI Taxonomy" id="9606"/>
    <lineage>
        <taxon>Eukaryota</taxon>
        <taxon>Metazoa</taxon>
        <taxon>Chordata</taxon>
        <taxon>Craniata</taxon>
        <taxon>Vertebrata</taxon>
        <taxon>Euteleostomi</taxon>
        <taxon>Mammalia</taxon>
        <taxon>Eutheria</taxon>
        <taxon>Euarchontoglires</taxon>
        <taxon>Primates</taxon>
        <taxon>Haplorrhini</taxon>
        <taxon>Catarrhini</taxon>
        <taxon>Hominidae</taxon>
        <taxon>Homo</taxon>
    </lineage>
</organism>
<gene>
    <name type="primary">TIGD1</name>
</gene>
<dbReference type="EMBL" id="AK056329">
    <property type="protein sequence ID" value="BAB71153.1"/>
    <property type="molecule type" value="mRNA"/>
</dbReference>
<dbReference type="EMBL" id="AC092165">
    <property type="protein sequence ID" value="AAY24104.1"/>
    <property type="molecule type" value="Genomic_DNA"/>
</dbReference>
<dbReference type="EMBL" id="BC035143">
    <property type="protein sequence ID" value="AAH35143.2"/>
    <property type="molecule type" value="mRNA"/>
</dbReference>
<dbReference type="EMBL" id="BC063500">
    <property type="protein sequence ID" value="AAH63500.2"/>
    <property type="molecule type" value="mRNA"/>
</dbReference>
<dbReference type="CCDS" id="CCDS2495.1"/>
<dbReference type="RefSeq" id="NP_663748.1">
    <property type="nucleotide sequence ID" value="NM_145702.4"/>
</dbReference>
<dbReference type="SMR" id="Q96MW7"/>
<dbReference type="BioGRID" id="128345">
    <property type="interactions" value="12"/>
</dbReference>
<dbReference type="DIP" id="DIP-61581N"/>
<dbReference type="FunCoup" id="Q96MW7">
    <property type="interactions" value="869"/>
</dbReference>
<dbReference type="IntAct" id="Q96MW7">
    <property type="interactions" value="9"/>
</dbReference>
<dbReference type="STRING" id="9606.ENSP00000386186"/>
<dbReference type="GlyGen" id="Q96MW7">
    <property type="glycosylation" value="1 site, 1 O-linked glycan (1 site)"/>
</dbReference>
<dbReference type="iPTMnet" id="Q96MW7"/>
<dbReference type="PhosphoSitePlus" id="Q96MW7"/>
<dbReference type="BioMuta" id="TIGD1"/>
<dbReference type="DMDM" id="74762678"/>
<dbReference type="jPOST" id="Q96MW7"/>
<dbReference type="MassIVE" id="Q96MW7"/>
<dbReference type="PaxDb" id="9606-ENSP00000386186"/>
<dbReference type="PeptideAtlas" id="Q96MW7"/>
<dbReference type="ProteomicsDB" id="77425"/>
<dbReference type="Antibodypedia" id="34434">
    <property type="antibodies" value="276 antibodies from 28 providers"/>
</dbReference>
<dbReference type="DNASU" id="200765"/>
<dbReference type="Ensembl" id="ENST00000408957.7">
    <property type="protein sequence ID" value="ENSP00000386186.3"/>
    <property type="gene ID" value="ENSG00000221944.9"/>
</dbReference>
<dbReference type="GeneID" id="200765"/>
<dbReference type="KEGG" id="hsa:200765"/>
<dbReference type="MANE-Select" id="ENST00000408957.7">
    <property type="protein sequence ID" value="ENSP00000386186.3"/>
    <property type="RefSeq nucleotide sequence ID" value="NM_145702.4"/>
    <property type="RefSeq protein sequence ID" value="NP_663748.1"/>
</dbReference>
<dbReference type="UCSC" id="uc002vsy.3">
    <property type="organism name" value="human"/>
</dbReference>
<dbReference type="AGR" id="HGNC:14523"/>
<dbReference type="CTD" id="200765"/>
<dbReference type="DisGeNET" id="200765"/>
<dbReference type="GeneCards" id="TIGD1"/>
<dbReference type="HGNC" id="HGNC:14523">
    <property type="gene designation" value="TIGD1"/>
</dbReference>
<dbReference type="HPA" id="ENSG00000221944">
    <property type="expression patterns" value="Low tissue specificity"/>
</dbReference>
<dbReference type="MalaCards" id="TIGD1"/>
<dbReference type="MIM" id="612972">
    <property type="type" value="gene"/>
</dbReference>
<dbReference type="neXtProt" id="NX_Q96MW7"/>
<dbReference type="OpenTargets" id="ENSG00000221944"/>
<dbReference type="PharmGKB" id="PA38382"/>
<dbReference type="VEuPathDB" id="HostDB:ENSG00000221944"/>
<dbReference type="eggNOG" id="KOG3105">
    <property type="taxonomic scope" value="Eukaryota"/>
</dbReference>
<dbReference type="GeneTree" id="ENSGT00940000155163"/>
<dbReference type="HOGENOM" id="CLU_018294_1_4_1"/>
<dbReference type="InParanoid" id="Q96MW7"/>
<dbReference type="OMA" id="MDAQRKW"/>
<dbReference type="OrthoDB" id="125347at2759"/>
<dbReference type="PAN-GO" id="Q96MW7">
    <property type="GO annotations" value="2 GO annotations based on evolutionary models"/>
</dbReference>
<dbReference type="PhylomeDB" id="Q96MW7"/>
<dbReference type="TreeFam" id="TF101131"/>
<dbReference type="PathwayCommons" id="Q96MW7"/>
<dbReference type="SignaLink" id="Q96MW7"/>
<dbReference type="BioGRID-ORCS" id="200765">
    <property type="hits" value="52 hits in 1076 CRISPR screens"/>
</dbReference>
<dbReference type="ChiTaRS" id="TIGD1">
    <property type="organism name" value="human"/>
</dbReference>
<dbReference type="GenomeRNAi" id="200765"/>
<dbReference type="Pharos" id="Q96MW7">
    <property type="development level" value="Tdark"/>
</dbReference>
<dbReference type="PRO" id="PR:Q96MW7"/>
<dbReference type="Proteomes" id="UP000005640">
    <property type="component" value="Chromosome 2"/>
</dbReference>
<dbReference type="RNAct" id="Q96MW7">
    <property type="molecule type" value="protein"/>
</dbReference>
<dbReference type="Bgee" id="ENSG00000221944">
    <property type="expression patterns" value="Expressed in male germ line stem cell (sensu Vertebrata) in testis and 159 other cell types or tissues"/>
</dbReference>
<dbReference type="GO" id="GO:0005634">
    <property type="term" value="C:nucleus"/>
    <property type="evidence" value="ECO:0000318"/>
    <property type="project" value="GO_Central"/>
</dbReference>
<dbReference type="GO" id="GO:0003677">
    <property type="term" value="F:DNA binding"/>
    <property type="evidence" value="ECO:0000318"/>
    <property type="project" value="GO_Central"/>
</dbReference>
<dbReference type="Gene3D" id="1.10.10.60">
    <property type="entry name" value="Homeodomain-like"/>
    <property type="match status" value="2"/>
</dbReference>
<dbReference type="Gene3D" id="3.30.420.10">
    <property type="entry name" value="Ribonuclease H-like superfamily/Ribonuclease H"/>
    <property type="match status" value="1"/>
</dbReference>
<dbReference type="InterPro" id="IPR050863">
    <property type="entry name" value="CenT-Element_Derived"/>
</dbReference>
<dbReference type="InterPro" id="IPR004875">
    <property type="entry name" value="DDE_SF_endonuclease_dom"/>
</dbReference>
<dbReference type="InterPro" id="IPR009057">
    <property type="entry name" value="Homeodomain-like_sf"/>
</dbReference>
<dbReference type="InterPro" id="IPR006600">
    <property type="entry name" value="HTH_CenpB_DNA-bd_dom"/>
</dbReference>
<dbReference type="InterPro" id="IPR007889">
    <property type="entry name" value="HTH_Psq"/>
</dbReference>
<dbReference type="InterPro" id="IPR036397">
    <property type="entry name" value="RNaseH_sf"/>
</dbReference>
<dbReference type="PANTHER" id="PTHR19303:SF26">
    <property type="entry name" value="TIGGER TRANSPOSABLE ELEMENT-DERIVED PROTEIN 1"/>
    <property type="match status" value="1"/>
</dbReference>
<dbReference type="PANTHER" id="PTHR19303">
    <property type="entry name" value="TRANSPOSON"/>
    <property type="match status" value="1"/>
</dbReference>
<dbReference type="Pfam" id="PF04218">
    <property type="entry name" value="CENP-B_N"/>
    <property type="match status" value="1"/>
</dbReference>
<dbReference type="Pfam" id="PF03184">
    <property type="entry name" value="DDE_1"/>
    <property type="match status" value="1"/>
</dbReference>
<dbReference type="Pfam" id="PF03221">
    <property type="entry name" value="HTH_Tnp_Tc5"/>
    <property type="match status" value="1"/>
</dbReference>
<dbReference type="SMART" id="SM00674">
    <property type="entry name" value="CENPB"/>
    <property type="match status" value="1"/>
</dbReference>
<dbReference type="SUPFAM" id="SSF46689">
    <property type="entry name" value="Homeodomain-like"/>
    <property type="match status" value="2"/>
</dbReference>
<dbReference type="PROSITE" id="PS51253">
    <property type="entry name" value="HTH_CENPB"/>
    <property type="match status" value="1"/>
</dbReference>
<dbReference type="PROSITE" id="PS50960">
    <property type="entry name" value="HTH_PSQ"/>
    <property type="match status" value="1"/>
</dbReference>
<accession>Q96MW7</accession>
<accession>Q6P4D2</accession>
<accession>Q6PIF9</accession>
<proteinExistence type="evidence at protein level"/>
<sequence length="591" mass="67299">MASKCSSERKSRTSLTLNQKLEMIKLSEEGMSKAEIGRRLGLLRQTVSQVVNAKEKFLKEVKSATPMNTRMIRKRNSLIADMEKVLVVWIEDQTSRNIPLSQSLIQNKALTLFNSMKAERGVEAAEEKFEASRGWFMRFKERSHFHNIKAQGEAASADVEAAASYPEALAKIIDEGGYTKQQIFNVDETAFYWKKMPSRTFIAREEKSVPGFKASKDRLTLLLGANAAGDFKLKPMLIYHSENPRALKNYTKSTLPVLYKWNSKARMTAHLFTAWFTEYFKPTVETYCSEKKIPFKILLLIDNAPSHPRALMEIYEEINVIFMPANTTSILQPMDQGVISTFKSYYLRNTFHKALAAMDSDVSDGSGQSKLKTFWKGFTILDAIKNIRDSWEEVKLSTLTGVWKKLIPTLIDDYEGFKTSVEEVSADVVEIAKELELEVEPEDVTELLQSHDKTLTDEELFLMDAQRKWFLEMESTPGEDAVNIVEMTTKDLEYYINLVDKAAAGFERIDSNFERSSTVGKMLSNSIACYREIFHERKSQLMRKASPMSYFRKLPQPPQPSAATTLTSQQPSTSRQDPPPAKRVRLTEGSD</sequence>
<comment type="interaction">
    <interactant intactId="EBI-9091586">
        <id>Q96MW7</id>
    </interactant>
    <interactant intactId="EBI-21535880">
        <id>Q92870-2</id>
        <label>APBB2</label>
    </interactant>
    <organismsDiffer>false</organismsDiffer>
    <experiments>3</experiments>
</comment>
<comment type="interaction">
    <interactant intactId="EBI-9091586">
        <id>Q96MW7</id>
    </interactant>
    <interactant intactId="EBI-466029">
        <id>P42858</id>
        <label>HTT</label>
    </interactant>
    <organismsDiffer>false</organismsDiffer>
    <experiments>9</experiments>
</comment>
<comment type="subcellular location">
    <subcellularLocation>
        <location evidence="6">Nucleus</location>
    </subcellularLocation>
</comment>
<comment type="similarity">
    <text evidence="6">Belongs to the tigger transposable element derived protein family.</text>
</comment>